<keyword id="KW-0143">Chaperone</keyword>
<keyword id="KW-0963">Cytoplasm</keyword>
<keyword id="KW-0235">DNA replication</keyword>
<keyword id="KW-0479">Metal-binding</keyword>
<keyword id="KW-1185">Reference proteome</keyword>
<keyword id="KW-0677">Repeat</keyword>
<keyword id="KW-0346">Stress response</keyword>
<keyword id="KW-0862">Zinc</keyword>
<keyword id="KW-0863">Zinc-finger</keyword>
<dbReference type="EMBL" id="AM942759">
    <property type="protein sequence ID" value="CAR40250.1"/>
    <property type="molecule type" value="Genomic_DNA"/>
</dbReference>
<dbReference type="RefSeq" id="WP_004245212.1">
    <property type="nucleotide sequence ID" value="NC_010554.1"/>
</dbReference>
<dbReference type="SMR" id="B4F2V6"/>
<dbReference type="EnsemblBacteria" id="CAR40250">
    <property type="protein sequence ID" value="CAR40250"/>
    <property type="gene ID" value="PMI0010"/>
</dbReference>
<dbReference type="GeneID" id="6802317"/>
<dbReference type="KEGG" id="pmr:PMI0010"/>
<dbReference type="eggNOG" id="COG0484">
    <property type="taxonomic scope" value="Bacteria"/>
</dbReference>
<dbReference type="HOGENOM" id="CLU_017633_0_7_6"/>
<dbReference type="Proteomes" id="UP000008319">
    <property type="component" value="Chromosome"/>
</dbReference>
<dbReference type="GO" id="GO:0005737">
    <property type="term" value="C:cytoplasm"/>
    <property type="evidence" value="ECO:0007669"/>
    <property type="project" value="UniProtKB-SubCell"/>
</dbReference>
<dbReference type="GO" id="GO:0005524">
    <property type="term" value="F:ATP binding"/>
    <property type="evidence" value="ECO:0007669"/>
    <property type="project" value="InterPro"/>
</dbReference>
<dbReference type="GO" id="GO:0031072">
    <property type="term" value="F:heat shock protein binding"/>
    <property type="evidence" value="ECO:0007669"/>
    <property type="project" value="InterPro"/>
</dbReference>
<dbReference type="GO" id="GO:0051082">
    <property type="term" value="F:unfolded protein binding"/>
    <property type="evidence" value="ECO:0007669"/>
    <property type="project" value="UniProtKB-UniRule"/>
</dbReference>
<dbReference type="GO" id="GO:0008270">
    <property type="term" value="F:zinc ion binding"/>
    <property type="evidence" value="ECO:0007669"/>
    <property type="project" value="UniProtKB-UniRule"/>
</dbReference>
<dbReference type="GO" id="GO:0051085">
    <property type="term" value="P:chaperone cofactor-dependent protein refolding"/>
    <property type="evidence" value="ECO:0007669"/>
    <property type="project" value="TreeGrafter"/>
</dbReference>
<dbReference type="GO" id="GO:0006260">
    <property type="term" value="P:DNA replication"/>
    <property type="evidence" value="ECO:0007669"/>
    <property type="project" value="UniProtKB-KW"/>
</dbReference>
<dbReference type="GO" id="GO:0042026">
    <property type="term" value="P:protein refolding"/>
    <property type="evidence" value="ECO:0007669"/>
    <property type="project" value="TreeGrafter"/>
</dbReference>
<dbReference type="GO" id="GO:0009408">
    <property type="term" value="P:response to heat"/>
    <property type="evidence" value="ECO:0007669"/>
    <property type="project" value="InterPro"/>
</dbReference>
<dbReference type="CDD" id="cd06257">
    <property type="entry name" value="DnaJ"/>
    <property type="match status" value="1"/>
</dbReference>
<dbReference type="CDD" id="cd10747">
    <property type="entry name" value="DnaJ_C"/>
    <property type="match status" value="1"/>
</dbReference>
<dbReference type="CDD" id="cd10719">
    <property type="entry name" value="DnaJ_zf"/>
    <property type="match status" value="1"/>
</dbReference>
<dbReference type="FunFam" id="1.10.287.110:FF:000003">
    <property type="entry name" value="Molecular chaperone DnaJ"/>
    <property type="match status" value="1"/>
</dbReference>
<dbReference type="FunFam" id="2.10.230.10:FF:000002">
    <property type="entry name" value="Molecular chaperone DnaJ"/>
    <property type="match status" value="1"/>
</dbReference>
<dbReference type="FunFam" id="2.60.260.20:FF:000004">
    <property type="entry name" value="Molecular chaperone DnaJ"/>
    <property type="match status" value="1"/>
</dbReference>
<dbReference type="Gene3D" id="1.10.287.110">
    <property type="entry name" value="DnaJ domain"/>
    <property type="match status" value="1"/>
</dbReference>
<dbReference type="Gene3D" id="2.10.230.10">
    <property type="entry name" value="Heat shock protein DnaJ, cysteine-rich domain"/>
    <property type="match status" value="1"/>
</dbReference>
<dbReference type="Gene3D" id="2.60.260.20">
    <property type="entry name" value="Urease metallochaperone UreE, N-terminal domain"/>
    <property type="match status" value="2"/>
</dbReference>
<dbReference type="HAMAP" id="MF_01152">
    <property type="entry name" value="DnaJ"/>
    <property type="match status" value="1"/>
</dbReference>
<dbReference type="InterPro" id="IPR012724">
    <property type="entry name" value="DnaJ"/>
</dbReference>
<dbReference type="InterPro" id="IPR002939">
    <property type="entry name" value="DnaJ_C"/>
</dbReference>
<dbReference type="InterPro" id="IPR001623">
    <property type="entry name" value="DnaJ_domain"/>
</dbReference>
<dbReference type="InterPro" id="IPR018253">
    <property type="entry name" value="DnaJ_domain_CS"/>
</dbReference>
<dbReference type="InterPro" id="IPR008971">
    <property type="entry name" value="HSP40/DnaJ_pept-bd"/>
</dbReference>
<dbReference type="InterPro" id="IPR001305">
    <property type="entry name" value="HSP_DnaJ_Cys-rich_dom"/>
</dbReference>
<dbReference type="InterPro" id="IPR036410">
    <property type="entry name" value="HSP_DnaJ_Cys-rich_dom_sf"/>
</dbReference>
<dbReference type="InterPro" id="IPR036869">
    <property type="entry name" value="J_dom_sf"/>
</dbReference>
<dbReference type="NCBIfam" id="TIGR02349">
    <property type="entry name" value="DnaJ_bact"/>
    <property type="match status" value="1"/>
</dbReference>
<dbReference type="NCBIfam" id="NF008035">
    <property type="entry name" value="PRK10767.1"/>
    <property type="match status" value="1"/>
</dbReference>
<dbReference type="PANTHER" id="PTHR43096:SF48">
    <property type="entry name" value="CHAPERONE PROTEIN DNAJ"/>
    <property type="match status" value="1"/>
</dbReference>
<dbReference type="PANTHER" id="PTHR43096">
    <property type="entry name" value="DNAJ HOMOLOG 1, MITOCHONDRIAL-RELATED"/>
    <property type="match status" value="1"/>
</dbReference>
<dbReference type="Pfam" id="PF00226">
    <property type="entry name" value="DnaJ"/>
    <property type="match status" value="1"/>
</dbReference>
<dbReference type="Pfam" id="PF01556">
    <property type="entry name" value="DnaJ_C"/>
    <property type="match status" value="1"/>
</dbReference>
<dbReference type="Pfam" id="PF00684">
    <property type="entry name" value="DnaJ_CXXCXGXG"/>
    <property type="match status" value="1"/>
</dbReference>
<dbReference type="PRINTS" id="PR00625">
    <property type="entry name" value="JDOMAIN"/>
</dbReference>
<dbReference type="SMART" id="SM00271">
    <property type="entry name" value="DnaJ"/>
    <property type="match status" value="1"/>
</dbReference>
<dbReference type="SUPFAM" id="SSF46565">
    <property type="entry name" value="Chaperone J-domain"/>
    <property type="match status" value="1"/>
</dbReference>
<dbReference type="SUPFAM" id="SSF57938">
    <property type="entry name" value="DnaJ/Hsp40 cysteine-rich domain"/>
    <property type="match status" value="1"/>
</dbReference>
<dbReference type="SUPFAM" id="SSF49493">
    <property type="entry name" value="HSP40/DnaJ peptide-binding domain"/>
    <property type="match status" value="2"/>
</dbReference>
<dbReference type="PROSITE" id="PS00636">
    <property type="entry name" value="DNAJ_1"/>
    <property type="match status" value="1"/>
</dbReference>
<dbReference type="PROSITE" id="PS50076">
    <property type="entry name" value="DNAJ_2"/>
    <property type="match status" value="1"/>
</dbReference>
<dbReference type="PROSITE" id="PS51188">
    <property type="entry name" value="ZF_CR"/>
    <property type="match status" value="1"/>
</dbReference>
<proteinExistence type="inferred from homology"/>
<evidence type="ECO:0000255" key="1">
    <source>
        <dbReference type="HAMAP-Rule" id="MF_01152"/>
    </source>
</evidence>
<organism>
    <name type="scientific">Proteus mirabilis (strain HI4320)</name>
    <dbReference type="NCBI Taxonomy" id="529507"/>
    <lineage>
        <taxon>Bacteria</taxon>
        <taxon>Pseudomonadati</taxon>
        <taxon>Pseudomonadota</taxon>
        <taxon>Gammaproteobacteria</taxon>
        <taxon>Enterobacterales</taxon>
        <taxon>Morganellaceae</taxon>
        <taxon>Proteus</taxon>
    </lineage>
</organism>
<comment type="function">
    <text evidence="1">Participates actively in the response to hyperosmotic and heat shock by preventing the aggregation of stress-denatured proteins and by disaggregating proteins, also in an autonomous, DnaK-independent fashion. Unfolded proteins bind initially to DnaJ; upon interaction with the DnaJ-bound protein, DnaK hydrolyzes its bound ATP, resulting in the formation of a stable complex. GrpE releases ADP from DnaK; ATP binding to DnaK triggers the release of the substrate protein, thus completing the reaction cycle. Several rounds of ATP-dependent interactions between DnaJ, DnaK and GrpE are required for fully efficient folding. Also involved, together with DnaK and GrpE, in the DNA replication of plasmids through activation of initiation proteins.</text>
</comment>
<comment type="cofactor">
    <cofactor evidence="1">
        <name>Zn(2+)</name>
        <dbReference type="ChEBI" id="CHEBI:29105"/>
    </cofactor>
    <text evidence="1">Binds 2 Zn(2+) ions per monomer.</text>
</comment>
<comment type="subunit">
    <text evidence="1">Homodimer.</text>
</comment>
<comment type="subcellular location">
    <subcellularLocation>
        <location evidence="1">Cytoplasm</location>
    </subcellularLocation>
</comment>
<comment type="domain">
    <text evidence="1">The J domain is necessary and sufficient to stimulate DnaK ATPase activity. Zinc center 1 plays an important role in the autonomous, DnaK-independent chaperone activity of DnaJ. Zinc center 2 is essential for interaction with DnaK and for DnaJ activity.</text>
</comment>
<comment type="similarity">
    <text evidence="1">Belongs to the DnaJ family.</text>
</comment>
<feature type="chain" id="PRO_1000137711" description="Chaperone protein DnaJ">
    <location>
        <begin position="1"/>
        <end position="378"/>
    </location>
</feature>
<feature type="domain" description="J" evidence="1">
    <location>
        <begin position="5"/>
        <end position="70"/>
    </location>
</feature>
<feature type="repeat" description="CXXCXGXG motif">
    <location>
        <begin position="146"/>
        <end position="153"/>
    </location>
</feature>
<feature type="repeat" description="CXXCXGXG motif">
    <location>
        <begin position="163"/>
        <end position="170"/>
    </location>
</feature>
<feature type="repeat" description="CXXCXGXG motif">
    <location>
        <begin position="185"/>
        <end position="192"/>
    </location>
</feature>
<feature type="repeat" description="CXXCXGXG motif">
    <location>
        <begin position="199"/>
        <end position="206"/>
    </location>
</feature>
<feature type="zinc finger region" description="CR-type" evidence="1">
    <location>
        <begin position="133"/>
        <end position="211"/>
    </location>
</feature>
<feature type="binding site" evidence="1">
    <location>
        <position position="146"/>
    </location>
    <ligand>
        <name>Zn(2+)</name>
        <dbReference type="ChEBI" id="CHEBI:29105"/>
        <label>1</label>
    </ligand>
</feature>
<feature type="binding site" evidence="1">
    <location>
        <position position="149"/>
    </location>
    <ligand>
        <name>Zn(2+)</name>
        <dbReference type="ChEBI" id="CHEBI:29105"/>
        <label>1</label>
    </ligand>
</feature>
<feature type="binding site" evidence="1">
    <location>
        <position position="163"/>
    </location>
    <ligand>
        <name>Zn(2+)</name>
        <dbReference type="ChEBI" id="CHEBI:29105"/>
        <label>2</label>
    </ligand>
</feature>
<feature type="binding site" evidence="1">
    <location>
        <position position="166"/>
    </location>
    <ligand>
        <name>Zn(2+)</name>
        <dbReference type="ChEBI" id="CHEBI:29105"/>
        <label>2</label>
    </ligand>
</feature>
<feature type="binding site" evidence="1">
    <location>
        <position position="185"/>
    </location>
    <ligand>
        <name>Zn(2+)</name>
        <dbReference type="ChEBI" id="CHEBI:29105"/>
        <label>2</label>
    </ligand>
</feature>
<feature type="binding site" evidence="1">
    <location>
        <position position="188"/>
    </location>
    <ligand>
        <name>Zn(2+)</name>
        <dbReference type="ChEBI" id="CHEBI:29105"/>
        <label>2</label>
    </ligand>
</feature>
<feature type="binding site" evidence="1">
    <location>
        <position position="199"/>
    </location>
    <ligand>
        <name>Zn(2+)</name>
        <dbReference type="ChEBI" id="CHEBI:29105"/>
        <label>1</label>
    </ligand>
</feature>
<feature type="binding site" evidence="1">
    <location>
        <position position="202"/>
    </location>
    <ligand>
        <name>Zn(2+)</name>
        <dbReference type="ChEBI" id="CHEBI:29105"/>
        <label>1</label>
    </ligand>
</feature>
<protein>
    <recommendedName>
        <fullName evidence="1">Chaperone protein DnaJ</fullName>
    </recommendedName>
</protein>
<sequence length="378" mass="41391">MAKRDFYEVLGLSKTADEKEIKRAYKRLAMKYHPDRNQGDKDSESKFKEIKEAYEVLSDPQKRAAYDQYGHAAFEQGGFGGQGGGGFGGADFSDIFGDVFGDIFGGGRRQQRAARGSDLQYNMDLTLEEAVRGITKEIRIPTLETCDKCHGSGAKEGTSAETCSTCHGAGQVHLRQGFFTVQQPCPTCHGRGKVIKEPCSKCHGDGRVERYKTLSVKIPAGVDTGDRIRLSGEGEAGEQGAPAGDLYVQVHVRQHHIFERDGNNLYCEVPINFAVAALGGEIEVPTLDGRVKLKIPAETQTGKMFRMKGKGVKSVRSHGVGDLMCRVVVETPVKLNEKQKQLMEQLGESFGGKGGEKNTPRSKSFLDGVKKFFDDLTK</sequence>
<gene>
    <name evidence="1" type="primary">dnaJ</name>
    <name type="ordered locus">PMI0010</name>
</gene>
<reference key="1">
    <citation type="journal article" date="2008" name="J. Bacteriol.">
        <title>Complete genome sequence of uropathogenic Proteus mirabilis, a master of both adherence and motility.</title>
        <authorList>
            <person name="Pearson M.M."/>
            <person name="Sebaihia M."/>
            <person name="Churcher C."/>
            <person name="Quail M.A."/>
            <person name="Seshasayee A.S."/>
            <person name="Luscombe N.M."/>
            <person name="Abdellah Z."/>
            <person name="Arrosmith C."/>
            <person name="Atkin B."/>
            <person name="Chillingworth T."/>
            <person name="Hauser H."/>
            <person name="Jagels K."/>
            <person name="Moule S."/>
            <person name="Mungall K."/>
            <person name="Norbertczak H."/>
            <person name="Rabbinowitsch E."/>
            <person name="Walker D."/>
            <person name="Whithead S."/>
            <person name="Thomson N.R."/>
            <person name="Rather P.N."/>
            <person name="Parkhill J."/>
            <person name="Mobley H.L.T."/>
        </authorList>
    </citation>
    <scope>NUCLEOTIDE SEQUENCE [LARGE SCALE GENOMIC DNA]</scope>
    <source>
        <strain>HI4320</strain>
    </source>
</reference>
<name>DNAJ_PROMH</name>
<accession>B4F2V6</accession>